<feature type="chain" id="PRO_0000167413" description="Ribosome-recycling factor">
    <location>
        <begin position="1"/>
        <end position="186"/>
    </location>
</feature>
<comment type="function">
    <text evidence="1">Responsible for the release of ribosomes from messenger RNA at the termination of protein biosynthesis. May increase the efficiency of translation by recycling ribosomes from one round of translation to another.</text>
</comment>
<comment type="subcellular location">
    <subcellularLocation>
        <location evidence="1">Cytoplasm</location>
    </subcellularLocation>
</comment>
<comment type="similarity">
    <text evidence="1">Belongs to the RRF family.</text>
</comment>
<name>RRF_BACTN</name>
<accession>Q8A5J0</accession>
<dbReference type="EMBL" id="AE015928">
    <property type="protein sequence ID" value="AAO77356.1"/>
    <property type="molecule type" value="Genomic_DNA"/>
</dbReference>
<dbReference type="RefSeq" id="NP_811162.1">
    <property type="nucleotide sequence ID" value="NC_004663.1"/>
</dbReference>
<dbReference type="RefSeq" id="WP_008764014.1">
    <property type="nucleotide sequence ID" value="NC_004663.1"/>
</dbReference>
<dbReference type="SMR" id="Q8A5J0"/>
<dbReference type="FunCoup" id="Q8A5J0">
    <property type="interactions" value="535"/>
</dbReference>
<dbReference type="STRING" id="226186.BT_2249"/>
<dbReference type="PaxDb" id="226186-BT_2249"/>
<dbReference type="EnsemblBacteria" id="AAO77356">
    <property type="protein sequence ID" value="AAO77356"/>
    <property type="gene ID" value="BT_2249"/>
</dbReference>
<dbReference type="GeneID" id="60923418"/>
<dbReference type="KEGG" id="bth:BT_2249"/>
<dbReference type="PATRIC" id="fig|226186.12.peg.2314"/>
<dbReference type="eggNOG" id="COG0233">
    <property type="taxonomic scope" value="Bacteria"/>
</dbReference>
<dbReference type="HOGENOM" id="CLU_073981_2_0_10"/>
<dbReference type="InParanoid" id="Q8A5J0"/>
<dbReference type="OrthoDB" id="9804006at2"/>
<dbReference type="Proteomes" id="UP000001414">
    <property type="component" value="Chromosome"/>
</dbReference>
<dbReference type="GO" id="GO:0005737">
    <property type="term" value="C:cytoplasm"/>
    <property type="evidence" value="ECO:0007669"/>
    <property type="project" value="UniProtKB-SubCell"/>
</dbReference>
<dbReference type="GO" id="GO:0043023">
    <property type="term" value="F:ribosomal large subunit binding"/>
    <property type="evidence" value="ECO:0000318"/>
    <property type="project" value="GO_Central"/>
</dbReference>
<dbReference type="GO" id="GO:0006412">
    <property type="term" value="P:translation"/>
    <property type="evidence" value="ECO:0000318"/>
    <property type="project" value="GO_Central"/>
</dbReference>
<dbReference type="GO" id="GO:0006415">
    <property type="term" value="P:translational termination"/>
    <property type="evidence" value="ECO:0007669"/>
    <property type="project" value="UniProtKB-UniRule"/>
</dbReference>
<dbReference type="CDD" id="cd00520">
    <property type="entry name" value="RRF"/>
    <property type="match status" value="1"/>
</dbReference>
<dbReference type="FunFam" id="1.10.132.20:FF:000001">
    <property type="entry name" value="Ribosome-recycling factor"/>
    <property type="match status" value="1"/>
</dbReference>
<dbReference type="FunFam" id="3.30.1360.40:FF:000001">
    <property type="entry name" value="Ribosome-recycling factor"/>
    <property type="match status" value="1"/>
</dbReference>
<dbReference type="Gene3D" id="3.30.1360.40">
    <property type="match status" value="1"/>
</dbReference>
<dbReference type="Gene3D" id="1.10.132.20">
    <property type="entry name" value="Ribosome-recycling factor"/>
    <property type="match status" value="1"/>
</dbReference>
<dbReference type="HAMAP" id="MF_00040">
    <property type="entry name" value="RRF"/>
    <property type="match status" value="1"/>
</dbReference>
<dbReference type="InterPro" id="IPR002661">
    <property type="entry name" value="Ribosome_recyc_fac"/>
</dbReference>
<dbReference type="InterPro" id="IPR023584">
    <property type="entry name" value="Ribosome_recyc_fac_dom"/>
</dbReference>
<dbReference type="InterPro" id="IPR036191">
    <property type="entry name" value="RRF_sf"/>
</dbReference>
<dbReference type="NCBIfam" id="TIGR00496">
    <property type="entry name" value="frr"/>
    <property type="match status" value="1"/>
</dbReference>
<dbReference type="PANTHER" id="PTHR20982:SF3">
    <property type="entry name" value="MITOCHONDRIAL RIBOSOME RECYCLING FACTOR PSEUDO 1"/>
    <property type="match status" value="1"/>
</dbReference>
<dbReference type="PANTHER" id="PTHR20982">
    <property type="entry name" value="RIBOSOME RECYCLING FACTOR"/>
    <property type="match status" value="1"/>
</dbReference>
<dbReference type="Pfam" id="PF01765">
    <property type="entry name" value="RRF"/>
    <property type="match status" value="1"/>
</dbReference>
<dbReference type="SUPFAM" id="SSF55194">
    <property type="entry name" value="Ribosome recycling factor, RRF"/>
    <property type="match status" value="1"/>
</dbReference>
<gene>
    <name evidence="1" type="primary">frr</name>
    <name type="ordered locus">BT_2249</name>
</gene>
<proteinExistence type="inferred from homology"/>
<keyword id="KW-0963">Cytoplasm</keyword>
<keyword id="KW-0648">Protein biosynthesis</keyword>
<keyword id="KW-1185">Reference proteome</keyword>
<evidence type="ECO:0000255" key="1">
    <source>
        <dbReference type="HAMAP-Rule" id="MF_00040"/>
    </source>
</evidence>
<sequence length="186" mass="20724">MVDVKTCLDNAQEKMDMAVMYLEEALAHIRAGKASTRLLDGIRVDSYGSMVPISNVAALSTPDARSITIKPWDKSMFRAIEKAIIDSDLGIMPENNGEVIRIGIPPLTEERRRQLAKQCKAEGETAKVSVRNARRDGIDALKKAVKDGLAEDEQKNAEAKLQKIHDKYIKQIEDMLADKDKEIMTV</sequence>
<reference key="1">
    <citation type="journal article" date="2003" name="Science">
        <title>A genomic view of the human-Bacteroides thetaiotaomicron symbiosis.</title>
        <authorList>
            <person name="Xu J."/>
            <person name="Bjursell M.K."/>
            <person name="Himrod J."/>
            <person name="Deng S."/>
            <person name="Carmichael L.K."/>
            <person name="Chiang H.C."/>
            <person name="Hooper L.V."/>
            <person name="Gordon J.I."/>
        </authorList>
    </citation>
    <scope>NUCLEOTIDE SEQUENCE [LARGE SCALE GENOMIC DNA]</scope>
    <source>
        <strain>ATCC 29148 / DSM 2079 / JCM 5827 / CCUG 10774 / NCTC 10582 / VPI-5482 / E50</strain>
    </source>
</reference>
<organism>
    <name type="scientific">Bacteroides thetaiotaomicron (strain ATCC 29148 / DSM 2079 / JCM 5827 / CCUG 10774 / NCTC 10582 / VPI-5482 / E50)</name>
    <dbReference type="NCBI Taxonomy" id="226186"/>
    <lineage>
        <taxon>Bacteria</taxon>
        <taxon>Pseudomonadati</taxon>
        <taxon>Bacteroidota</taxon>
        <taxon>Bacteroidia</taxon>
        <taxon>Bacteroidales</taxon>
        <taxon>Bacteroidaceae</taxon>
        <taxon>Bacteroides</taxon>
    </lineage>
</organism>
<protein>
    <recommendedName>
        <fullName evidence="1">Ribosome-recycling factor</fullName>
        <shortName evidence="1">RRF</shortName>
    </recommendedName>
    <alternativeName>
        <fullName evidence="1">Ribosome-releasing factor</fullName>
    </alternativeName>
</protein>